<comment type="function">
    <text evidence="2">Catalyzes the biosynthesis and metabolism of eicosanoids. Catalyzes the isomerization of prostaglandin H2 to prostacyclin (= prostaglandin I2), a potent mediator of vasodilation and inhibitor of platelet aggregation. Additionally, displays dehydratase activity, toward hydroperoxyeicosatetraenoates (HPETEs), especially toward (15S)-hydroperoxy-(5Z,8Z,11Z,13E)-eicosatetraenoate (15(S)-HPETE).</text>
</comment>
<comment type="catalytic activity">
    <reaction evidence="2">
        <text>prostaglandin H2 = prostaglandin I2</text>
        <dbReference type="Rhea" id="RHEA:23580"/>
        <dbReference type="ChEBI" id="CHEBI:57403"/>
        <dbReference type="ChEBI" id="CHEBI:57405"/>
        <dbReference type="EC" id="5.3.99.4"/>
    </reaction>
    <physiologicalReaction direction="left-to-right" evidence="2">
        <dbReference type="Rhea" id="RHEA:23581"/>
    </physiologicalReaction>
</comment>
<comment type="catalytic activity">
    <reaction evidence="2">
        <text>a hydroperoxyeicosatetraenoate = an oxoeicosatetraenoate + H2O</text>
        <dbReference type="Rhea" id="RHEA:55556"/>
        <dbReference type="ChEBI" id="CHEBI:15377"/>
        <dbReference type="ChEBI" id="CHEBI:59720"/>
        <dbReference type="ChEBI" id="CHEBI:131859"/>
        <dbReference type="EC" id="4.2.1.152"/>
    </reaction>
    <physiologicalReaction direction="left-to-right" evidence="2">
        <dbReference type="Rhea" id="RHEA:55557"/>
    </physiologicalReaction>
</comment>
<comment type="catalytic activity">
    <reaction evidence="2">
        <text>(15S)-hydroperoxy-(5Z,8Z,11Z,13E)-eicosatetraenoate = 15-oxo-(5Z,8Z,11Z,13E)-eicosatetraenoate + H2O</text>
        <dbReference type="Rhea" id="RHEA:48636"/>
        <dbReference type="ChEBI" id="CHEBI:15377"/>
        <dbReference type="ChEBI" id="CHEBI:57410"/>
        <dbReference type="ChEBI" id="CHEBI:57446"/>
    </reaction>
</comment>
<comment type="catalytic activity">
    <reaction evidence="2">
        <text>(15S)-hydroperoxy-(5Z,8Z,11Z,13E)-eicosatetraenoate + AH2 = (15S)-hydroxy-(5Z,8Z,11Z,13E)-eicosatetraenoate + A + H2O</text>
        <dbReference type="Rhea" id="RHEA:48856"/>
        <dbReference type="ChEBI" id="CHEBI:13193"/>
        <dbReference type="ChEBI" id="CHEBI:15377"/>
        <dbReference type="ChEBI" id="CHEBI:17499"/>
        <dbReference type="ChEBI" id="CHEBI:57409"/>
        <dbReference type="ChEBI" id="CHEBI:57446"/>
    </reaction>
</comment>
<comment type="cofactor">
    <cofactor evidence="2">
        <name>heme</name>
        <dbReference type="ChEBI" id="CHEBI:30413"/>
    </cofactor>
</comment>
<comment type="subcellular location">
    <subcellularLocation>
        <location evidence="3">Endoplasmic reticulum membrane</location>
        <topology evidence="4">Single-pass membrane protein</topology>
    </subcellularLocation>
</comment>
<comment type="similarity">
    <text evidence="5">Belongs to the cytochrome P450 family.</text>
</comment>
<proteinExistence type="evidence at transcript level"/>
<protein>
    <recommendedName>
        <fullName>Prostacyclin synthase</fullName>
        <ecNumber evidence="2">5.3.99.4</ecNumber>
    </recommendedName>
    <alternativeName>
        <fullName>Hydroperoxy icosatetraenoate dehydratase</fullName>
        <ecNumber evidence="2">4.2.1.152</ecNumber>
    </alternativeName>
    <alternativeName>
        <fullName>Prostaglandin I2 synthase</fullName>
    </alternativeName>
</protein>
<organism>
    <name type="scientific">Rattus norvegicus</name>
    <name type="common">Rat</name>
    <dbReference type="NCBI Taxonomy" id="10116"/>
    <lineage>
        <taxon>Eukaryota</taxon>
        <taxon>Metazoa</taxon>
        <taxon>Chordata</taxon>
        <taxon>Craniata</taxon>
        <taxon>Vertebrata</taxon>
        <taxon>Euteleostomi</taxon>
        <taxon>Mammalia</taxon>
        <taxon>Eutheria</taxon>
        <taxon>Euarchontoglires</taxon>
        <taxon>Glires</taxon>
        <taxon>Rodentia</taxon>
        <taxon>Myomorpha</taxon>
        <taxon>Muroidea</taxon>
        <taxon>Muridae</taxon>
        <taxon>Murinae</taxon>
        <taxon>Rattus</taxon>
    </lineage>
</organism>
<dbReference type="EC" id="5.3.99.4" evidence="2"/>
<dbReference type="EC" id="4.2.1.152" evidence="2"/>
<dbReference type="EMBL" id="U53855">
    <property type="protein sequence ID" value="AAB02322.1"/>
    <property type="molecule type" value="mRNA"/>
</dbReference>
<dbReference type="EMBL" id="BC061814">
    <property type="protein sequence ID" value="AAH61814.1"/>
    <property type="molecule type" value="mRNA"/>
</dbReference>
<dbReference type="RefSeq" id="NP_113745.1">
    <property type="nucleotide sequence ID" value="NM_031557.2"/>
</dbReference>
<dbReference type="SMR" id="Q62969"/>
<dbReference type="BioGRID" id="247559">
    <property type="interactions" value="1"/>
</dbReference>
<dbReference type="FunCoup" id="Q62969">
    <property type="interactions" value="140"/>
</dbReference>
<dbReference type="IntAct" id="Q62969">
    <property type="interactions" value="1"/>
</dbReference>
<dbReference type="STRING" id="10116.ENSRNOP00000074093"/>
<dbReference type="PhosphoSitePlus" id="Q62969"/>
<dbReference type="PaxDb" id="10116-ENSRNOP00000010891"/>
<dbReference type="Ensembl" id="ENSRNOT00000115486.1">
    <property type="protein sequence ID" value="ENSRNOP00000087709.1"/>
    <property type="gene ID" value="ENSRNOG00000008245.8"/>
</dbReference>
<dbReference type="GeneID" id="25527"/>
<dbReference type="KEGG" id="rno:25527"/>
<dbReference type="UCSC" id="RGD:3438">
    <property type="organism name" value="rat"/>
</dbReference>
<dbReference type="AGR" id="RGD:3438"/>
<dbReference type="CTD" id="5740"/>
<dbReference type="RGD" id="3438">
    <property type="gene designation" value="Ptgis"/>
</dbReference>
<dbReference type="eggNOG" id="KOG0684">
    <property type="taxonomic scope" value="Eukaryota"/>
</dbReference>
<dbReference type="GeneTree" id="ENSGT00940000153709"/>
<dbReference type="InParanoid" id="Q62969"/>
<dbReference type="OrthoDB" id="6692864at2759"/>
<dbReference type="PhylomeDB" id="Q62969"/>
<dbReference type="BRENDA" id="5.3.99.4">
    <property type="organism ID" value="5301"/>
</dbReference>
<dbReference type="Reactome" id="R-RNO-197264">
    <property type="pathway name" value="Nicotinamide salvaging"/>
</dbReference>
<dbReference type="Reactome" id="R-RNO-211979">
    <property type="pathway name" value="Eicosanoids"/>
</dbReference>
<dbReference type="Reactome" id="R-RNO-2162123">
    <property type="pathway name" value="Synthesis of Prostaglandins (PG) and Thromboxanes (TX)"/>
</dbReference>
<dbReference type="PRO" id="PR:Q62969"/>
<dbReference type="Proteomes" id="UP000002494">
    <property type="component" value="Chromosome 3"/>
</dbReference>
<dbReference type="GO" id="GO:0005901">
    <property type="term" value="C:caveola"/>
    <property type="evidence" value="ECO:0000250"/>
    <property type="project" value="UniProtKB"/>
</dbReference>
<dbReference type="GO" id="GO:0005737">
    <property type="term" value="C:cytoplasm"/>
    <property type="evidence" value="ECO:0000266"/>
    <property type="project" value="RGD"/>
</dbReference>
<dbReference type="GO" id="GO:0005783">
    <property type="term" value="C:endoplasmic reticulum"/>
    <property type="evidence" value="ECO:0000250"/>
    <property type="project" value="UniProtKB"/>
</dbReference>
<dbReference type="GO" id="GO:0005789">
    <property type="term" value="C:endoplasmic reticulum membrane"/>
    <property type="evidence" value="ECO:0000250"/>
    <property type="project" value="UniProtKB"/>
</dbReference>
<dbReference type="GO" id="GO:0005634">
    <property type="term" value="C:nucleus"/>
    <property type="evidence" value="ECO:0000250"/>
    <property type="project" value="UniProtKB"/>
</dbReference>
<dbReference type="GO" id="GO:0020037">
    <property type="term" value="F:heme binding"/>
    <property type="evidence" value="ECO:0000250"/>
    <property type="project" value="UniProtKB"/>
</dbReference>
<dbReference type="GO" id="GO:0106256">
    <property type="term" value="F:hydroperoxy icosatetraenoate dehydratase activity"/>
    <property type="evidence" value="ECO:0007669"/>
    <property type="project" value="UniProtKB-EC"/>
</dbReference>
<dbReference type="GO" id="GO:0005506">
    <property type="term" value="F:iron ion binding"/>
    <property type="evidence" value="ECO:0007669"/>
    <property type="project" value="InterPro"/>
</dbReference>
<dbReference type="GO" id="GO:0004497">
    <property type="term" value="F:monooxygenase activity"/>
    <property type="evidence" value="ECO:0007669"/>
    <property type="project" value="InterPro"/>
</dbReference>
<dbReference type="GO" id="GO:0016705">
    <property type="term" value="F:oxidoreductase activity, acting on paired donors, with incorporation or reduction of molecular oxygen"/>
    <property type="evidence" value="ECO:0007669"/>
    <property type="project" value="InterPro"/>
</dbReference>
<dbReference type="GO" id="GO:0008116">
    <property type="term" value="F:prostaglandin-I synthase activity"/>
    <property type="evidence" value="ECO:0000314"/>
    <property type="project" value="RGD"/>
</dbReference>
<dbReference type="GO" id="GO:0097190">
    <property type="term" value="P:apoptotic signaling pathway"/>
    <property type="evidence" value="ECO:0000266"/>
    <property type="project" value="RGD"/>
</dbReference>
<dbReference type="GO" id="GO:0071392">
    <property type="term" value="P:cellular response to estradiol stimulus"/>
    <property type="evidence" value="ECO:0000270"/>
    <property type="project" value="RGD"/>
</dbReference>
<dbReference type="GO" id="GO:0071456">
    <property type="term" value="P:cellular response to hypoxia"/>
    <property type="evidence" value="ECO:0000315"/>
    <property type="project" value="RGD"/>
</dbReference>
<dbReference type="GO" id="GO:0071347">
    <property type="term" value="P:cellular response to interleukin-1"/>
    <property type="evidence" value="ECO:0000250"/>
    <property type="project" value="UniProtKB"/>
</dbReference>
<dbReference type="GO" id="GO:0071354">
    <property type="term" value="P:cellular response to interleukin-6"/>
    <property type="evidence" value="ECO:0000250"/>
    <property type="project" value="UniProtKB"/>
</dbReference>
<dbReference type="GO" id="GO:0071356">
    <property type="term" value="P:cellular response to tumor necrosis factor"/>
    <property type="evidence" value="ECO:0000270"/>
    <property type="project" value="RGD"/>
</dbReference>
<dbReference type="GO" id="GO:0046697">
    <property type="term" value="P:decidualization"/>
    <property type="evidence" value="ECO:0000266"/>
    <property type="project" value="RGD"/>
</dbReference>
<dbReference type="GO" id="GO:0007566">
    <property type="term" value="P:embryo implantation"/>
    <property type="evidence" value="ECO:0000266"/>
    <property type="project" value="RGD"/>
</dbReference>
<dbReference type="GO" id="GO:0006690">
    <property type="term" value="P:icosanoid metabolic process"/>
    <property type="evidence" value="ECO:0000266"/>
    <property type="project" value="RGD"/>
</dbReference>
<dbReference type="GO" id="GO:0008285">
    <property type="term" value="P:negative regulation of cell population proliferation"/>
    <property type="evidence" value="ECO:0000315"/>
    <property type="project" value="RGD"/>
</dbReference>
<dbReference type="GO" id="GO:0050728">
    <property type="term" value="P:negative regulation of inflammatory response"/>
    <property type="evidence" value="ECO:0000250"/>
    <property type="project" value="UniProtKB"/>
</dbReference>
<dbReference type="GO" id="GO:0045019">
    <property type="term" value="P:negative regulation of nitric oxide biosynthetic process"/>
    <property type="evidence" value="ECO:0000250"/>
    <property type="project" value="UniProtKB"/>
</dbReference>
<dbReference type="GO" id="GO:0048662">
    <property type="term" value="P:negative regulation of smooth muscle cell proliferation"/>
    <property type="evidence" value="ECO:0000315"/>
    <property type="project" value="RGD"/>
</dbReference>
<dbReference type="GO" id="GO:0045766">
    <property type="term" value="P:positive regulation of angiogenesis"/>
    <property type="evidence" value="ECO:0000250"/>
    <property type="project" value="UniProtKB"/>
</dbReference>
<dbReference type="GO" id="GO:1900119">
    <property type="term" value="P:positive regulation of execution phase of apoptosis"/>
    <property type="evidence" value="ECO:0000250"/>
    <property type="project" value="UniProtKB"/>
</dbReference>
<dbReference type="GO" id="GO:0010628">
    <property type="term" value="P:positive regulation of gene expression"/>
    <property type="evidence" value="ECO:0000315"/>
    <property type="project" value="RGD"/>
</dbReference>
<dbReference type="GO" id="GO:0035360">
    <property type="term" value="P:positive regulation of peroxisome proliferator activated receptor signaling pathway"/>
    <property type="evidence" value="ECO:0000250"/>
    <property type="project" value="UniProtKB"/>
</dbReference>
<dbReference type="GO" id="GO:0001516">
    <property type="term" value="P:prostaglandin biosynthetic process"/>
    <property type="evidence" value="ECO:0000314"/>
    <property type="project" value="RGD"/>
</dbReference>
<dbReference type="GO" id="GO:0043279">
    <property type="term" value="P:response to alkaloid"/>
    <property type="evidence" value="ECO:0000270"/>
    <property type="project" value="RGD"/>
</dbReference>
<dbReference type="GO" id="GO:0032355">
    <property type="term" value="P:response to estradiol"/>
    <property type="evidence" value="ECO:0000270"/>
    <property type="project" value="RGD"/>
</dbReference>
<dbReference type="GO" id="GO:0001666">
    <property type="term" value="P:response to hypoxia"/>
    <property type="evidence" value="ECO:0000315"/>
    <property type="project" value="RGD"/>
</dbReference>
<dbReference type="GO" id="GO:0042311">
    <property type="term" value="P:vasodilation"/>
    <property type="evidence" value="ECO:0000266"/>
    <property type="project" value="RGD"/>
</dbReference>
<dbReference type="FunFam" id="1.10.630.10:FF:000025">
    <property type="entry name" value="Prostaglandin I2 (prostacyclin) synthase"/>
    <property type="match status" value="1"/>
</dbReference>
<dbReference type="Gene3D" id="1.10.630.10">
    <property type="entry name" value="Cytochrome P450"/>
    <property type="match status" value="1"/>
</dbReference>
<dbReference type="InterPro" id="IPR001128">
    <property type="entry name" value="Cyt_P450"/>
</dbReference>
<dbReference type="InterPro" id="IPR024204">
    <property type="entry name" value="Cyt_P450_CYP7A1-type"/>
</dbReference>
<dbReference type="InterPro" id="IPR002403">
    <property type="entry name" value="Cyt_P450_E_grp-IV"/>
</dbReference>
<dbReference type="InterPro" id="IPR036396">
    <property type="entry name" value="Cyt_P450_sf"/>
</dbReference>
<dbReference type="InterPro" id="IPR027286">
    <property type="entry name" value="PTGIS"/>
</dbReference>
<dbReference type="PANTHER" id="PTHR24306">
    <property type="match status" value="1"/>
</dbReference>
<dbReference type="PANTHER" id="PTHR24306:SF4">
    <property type="entry name" value="PROSTACYCLIN SYNTHASE"/>
    <property type="match status" value="1"/>
</dbReference>
<dbReference type="Pfam" id="PF00067">
    <property type="entry name" value="p450"/>
    <property type="match status" value="1"/>
</dbReference>
<dbReference type="PIRSF" id="PIRSF000047">
    <property type="entry name" value="Cytochrome_CYPVIIA1"/>
    <property type="match status" value="1"/>
</dbReference>
<dbReference type="PIRSF" id="PIRSF500628">
    <property type="entry name" value="PTGIS"/>
    <property type="match status" value="1"/>
</dbReference>
<dbReference type="PRINTS" id="PR00465">
    <property type="entry name" value="EP450IV"/>
</dbReference>
<dbReference type="PRINTS" id="PR00385">
    <property type="entry name" value="P450"/>
</dbReference>
<dbReference type="SUPFAM" id="SSF48264">
    <property type="entry name" value="Cytochrome P450"/>
    <property type="match status" value="1"/>
</dbReference>
<accession>Q62969</accession>
<gene>
    <name type="primary">Ptgis</name>
    <name type="synonym">Cyp8</name>
</gene>
<keyword id="KW-0256">Endoplasmic reticulum</keyword>
<keyword id="KW-0275">Fatty acid biosynthesis</keyword>
<keyword id="KW-0276">Fatty acid metabolism</keyword>
<keyword id="KW-0349">Heme</keyword>
<keyword id="KW-0408">Iron</keyword>
<keyword id="KW-0413">Isomerase</keyword>
<keyword id="KW-0444">Lipid biosynthesis</keyword>
<keyword id="KW-0443">Lipid metabolism</keyword>
<keyword id="KW-0456">Lyase</keyword>
<keyword id="KW-0472">Membrane</keyword>
<keyword id="KW-0479">Metal-binding</keyword>
<keyword id="KW-0643">Prostaglandin biosynthesis</keyword>
<keyword id="KW-0644">Prostaglandin metabolism</keyword>
<keyword id="KW-1185">Reference proteome</keyword>
<keyword id="KW-0812">Transmembrane</keyword>
<keyword id="KW-1133">Transmembrane helix</keyword>
<name>PTGIS_RAT</name>
<feature type="chain" id="PRO_0000051912" description="Prostacyclin synthase">
    <location>
        <begin position="1"/>
        <end position="501"/>
    </location>
</feature>
<feature type="transmembrane region" description="Helical" evidence="4">
    <location>
        <begin position="1"/>
        <end position="21"/>
    </location>
</feature>
<feature type="binding site" evidence="1">
    <location>
        <position position="107"/>
    </location>
    <ligand>
        <name>substrate</name>
    </ligand>
</feature>
<feature type="binding site" evidence="1">
    <location>
        <position position="113"/>
    </location>
    <ligand>
        <name>substrate</name>
    </ligand>
</feature>
<feature type="binding site" evidence="1">
    <location>
        <position position="288"/>
    </location>
    <ligand>
        <name>substrate</name>
    </ligand>
</feature>
<feature type="binding site" evidence="1">
    <location>
        <begin position="359"/>
        <end position="360"/>
    </location>
    <ligand>
        <name>substrate</name>
    </ligand>
</feature>
<feature type="binding site" evidence="1">
    <location>
        <position position="383"/>
    </location>
    <ligand>
        <name>substrate</name>
    </ligand>
</feature>
<feature type="binding site" description="axial binding residue" evidence="2">
    <location>
        <position position="442"/>
    </location>
    <ligand>
        <name>heme</name>
        <dbReference type="ChEBI" id="CHEBI:30413"/>
    </ligand>
    <ligandPart>
        <name>Fe</name>
        <dbReference type="ChEBI" id="CHEBI:18248"/>
    </ligandPart>
</feature>
<sequence length="501" mass="57128">MSWAALLGLLAVLLLLLLLLSRRRARRPGEPPLDLGSIPWLGHALEFGKDAASFLTRMKEKHGDIFTVLVGGRYVTVLLDPHSYDTVVWDLRTRLDFHPYAIFLMERIFDLQLPNFNPSEEKARMKPTLMHKDLQALTEAMYTNLRTVLLGDSTEGGSGWQEKGLLEFSYSSLLSAGYLTLYGVEASPRTHESQALDRDHSADVFRTFRQLDLMLPKLARGSLSVGDKDHACSVKSRLWKLLSPAGLASRADRSSWLESYLRHLEEMGVSEDMQARALVLQLWATQGNMGPTAFWLLLFLLKNPEALDAVHAELKRIVWQAEKPVLQMTALPQKILDSMPVLDSVLNETLRLTAAPFITREVMADLALPMADRREFSLRRGDRLLLFPFLSPQKDPEIYTEPEVFKYNRFLNPDGSEKKDFYKDGKRLKNYNMPWGAGHNQCLGKSYAINSIKQFVVLLLTHFDLELVSEDTEVPEFDLSRYGFGLMQPEEDVPIRYRTRL</sequence>
<reference key="1">
    <citation type="submission" date="1996-04" db="EMBL/GenBank/DDBJ databases">
        <authorList>
            <person name="Geraci M.W."/>
            <person name="Gao B."/>
            <person name="Shepherd D."/>
            <person name="Moore M."/>
            <person name="Vernon J."/>
            <person name="Miller Y.E."/>
            <person name="Voelkel N.F."/>
        </authorList>
    </citation>
    <scope>NUCLEOTIDE SEQUENCE [MRNA]</scope>
</reference>
<reference key="2">
    <citation type="journal article" date="2004" name="Genome Res.">
        <title>The status, quality, and expansion of the NIH full-length cDNA project: the Mammalian Gene Collection (MGC).</title>
        <authorList>
            <consortium name="The MGC Project Team"/>
        </authorList>
    </citation>
    <scope>NUCLEOTIDE SEQUENCE [LARGE SCALE MRNA]</scope>
    <source>
        <tissue>Prostate</tissue>
    </source>
</reference>
<evidence type="ECO:0000250" key="1">
    <source>
        <dbReference type="UniProtKB" id="F1RE08"/>
    </source>
</evidence>
<evidence type="ECO:0000250" key="2">
    <source>
        <dbReference type="UniProtKB" id="Q16647"/>
    </source>
</evidence>
<evidence type="ECO:0000250" key="3">
    <source>
        <dbReference type="UniProtKB" id="Q29626"/>
    </source>
</evidence>
<evidence type="ECO:0000255" key="4"/>
<evidence type="ECO:0000305" key="5"/>